<proteinExistence type="inferred from homology"/>
<evidence type="ECO:0000255" key="1">
    <source>
        <dbReference type="HAMAP-Rule" id="MF_00096"/>
    </source>
</evidence>
<protein>
    <recommendedName>
        <fullName evidence="1">DNA mismatch repair protein MutS</fullName>
    </recommendedName>
</protein>
<accession>A9R111</accession>
<reference key="1">
    <citation type="journal article" date="2010" name="J. Bacteriol.">
        <title>Genome sequence of the deep-rooted Yersinia pestis strain Angola reveals new insights into the evolution and pangenome of the plague bacterium.</title>
        <authorList>
            <person name="Eppinger M."/>
            <person name="Worsham P.L."/>
            <person name="Nikolich M.P."/>
            <person name="Riley D.R."/>
            <person name="Sebastian Y."/>
            <person name="Mou S."/>
            <person name="Achtman M."/>
            <person name="Lindler L.E."/>
            <person name="Ravel J."/>
        </authorList>
    </citation>
    <scope>NUCLEOTIDE SEQUENCE [LARGE SCALE GENOMIC DNA]</scope>
    <source>
        <strain>Angola</strain>
    </source>
</reference>
<organism>
    <name type="scientific">Yersinia pestis bv. Antiqua (strain Angola)</name>
    <dbReference type="NCBI Taxonomy" id="349746"/>
    <lineage>
        <taxon>Bacteria</taxon>
        <taxon>Pseudomonadati</taxon>
        <taxon>Pseudomonadota</taxon>
        <taxon>Gammaproteobacteria</taxon>
        <taxon>Enterobacterales</taxon>
        <taxon>Yersiniaceae</taxon>
        <taxon>Yersinia</taxon>
    </lineage>
</organism>
<sequence>MKNNDKLDSHTPMMQQYLRLKAQHPEILLFYRMGDFYELFYSDAKRASQLLDISLTKRGASAGEPIPMAGVPYHSIENYLAKLVQLGESAAICEQIGDPATSKGPVERKVVRIVTPGTISDEALLQERQDNLLAAIWQDAKGFGYATLDISSGRFRVAEPADLETMAAELQRTNPAELLYPENFEPMSLIEHRHGLRRRPLWEFELDTAKQQLNLQFGTRDLIGFGVEQAHLALRAAGCLLQYVKDTQRTSLPHIRGLTMERQQDGIIMDAATRRNLELTQNLSGGSENTLAAILDCSVTPMGSRMLKRWLHMPIRDIRVLTDRQQAIGGLQDIAAELQTPLRQVGDLERILARLALRTARPRDLARMRHAFQQLPEIHRLLQPIDVPHVQNLLSQVGQFDELQDLLERAIVETPPVLVRDGGVIASGYNAELDEWRALADGATDYLDRLEIREREKLGLDTLKVGFNGVHGYYIQVSRGQSHLVPIHYVRRQTLKNAERYIIPELKEYEDKVLTSKGKALAIEKGLYEEIFDLLLPHLPELQLSANALAELDVLANLAERAETLNYSCPTLSDKPGIKIMGGRHPVVEQVLKEPFISNPLTLSPQRRMLIITGPNMGGKSTYMRQTALIVLLAHLGSYVPADQATIGPIDRIFTRVGAADDLASGRSTFMVEMTETANILHNATEQSLVLMDEIGRGTSTYDGLSLAWACAENLASRIKAMTLFATHYFELTTLPEKMEGVVNVHLDALEHGETIAFMHSVQEGAASKSYGLAVAALAGVPRDVIKRARQKLKELESLSNNAAASTIDGSQMTLLNEEIPPAVEALEALDPDSLSPRQALEWIYRLKNMV</sequence>
<comment type="function">
    <text evidence="1">This protein is involved in the repair of mismatches in DNA. It is possible that it carries out the mismatch recognition step. This protein has a weak ATPase activity.</text>
</comment>
<comment type="similarity">
    <text evidence="1">Belongs to the DNA mismatch repair MutS family.</text>
</comment>
<name>MUTS_YERPG</name>
<dbReference type="EMBL" id="CP000901">
    <property type="protein sequence ID" value="ABX85706.1"/>
    <property type="molecule type" value="Genomic_DNA"/>
</dbReference>
<dbReference type="RefSeq" id="WP_002209399.1">
    <property type="nucleotide sequence ID" value="NZ_CP009935.1"/>
</dbReference>
<dbReference type="SMR" id="A9R111"/>
<dbReference type="GeneID" id="57975355"/>
<dbReference type="KEGG" id="ypg:YpAngola_A0956"/>
<dbReference type="PATRIC" id="fig|349746.12.peg.1904"/>
<dbReference type="GO" id="GO:0005829">
    <property type="term" value="C:cytosol"/>
    <property type="evidence" value="ECO:0007669"/>
    <property type="project" value="TreeGrafter"/>
</dbReference>
<dbReference type="GO" id="GO:0005524">
    <property type="term" value="F:ATP binding"/>
    <property type="evidence" value="ECO:0007669"/>
    <property type="project" value="UniProtKB-UniRule"/>
</dbReference>
<dbReference type="GO" id="GO:0140664">
    <property type="term" value="F:ATP-dependent DNA damage sensor activity"/>
    <property type="evidence" value="ECO:0007669"/>
    <property type="project" value="InterPro"/>
</dbReference>
<dbReference type="GO" id="GO:0003684">
    <property type="term" value="F:damaged DNA binding"/>
    <property type="evidence" value="ECO:0007669"/>
    <property type="project" value="UniProtKB-UniRule"/>
</dbReference>
<dbReference type="GO" id="GO:0030983">
    <property type="term" value="F:mismatched DNA binding"/>
    <property type="evidence" value="ECO:0007669"/>
    <property type="project" value="InterPro"/>
</dbReference>
<dbReference type="GO" id="GO:0006298">
    <property type="term" value="P:mismatch repair"/>
    <property type="evidence" value="ECO:0007669"/>
    <property type="project" value="UniProtKB-UniRule"/>
</dbReference>
<dbReference type="CDD" id="cd03284">
    <property type="entry name" value="ABC_MutS1"/>
    <property type="match status" value="1"/>
</dbReference>
<dbReference type="FunFam" id="1.10.1420.10:FF:000002">
    <property type="entry name" value="DNA mismatch repair protein MutS"/>
    <property type="match status" value="1"/>
</dbReference>
<dbReference type="FunFam" id="3.30.420.110:FF:000001">
    <property type="entry name" value="DNA mismatch repair protein MutS"/>
    <property type="match status" value="1"/>
</dbReference>
<dbReference type="FunFam" id="3.40.1170.10:FF:000001">
    <property type="entry name" value="DNA mismatch repair protein MutS"/>
    <property type="match status" value="1"/>
</dbReference>
<dbReference type="FunFam" id="3.40.50.300:FF:000283">
    <property type="entry name" value="DNA mismatch repair protein MutS"/>
    <property type="match status" value="1"/>
</dbReference>
<dbReference type="Gene3D" id="1.10.1420.10">
    <property type="match status" value="2"/>
</dbReference>
<dbReference type="Gene3D" id="6.10.140.430">
    <property type="match status" value="1"/>
</dbReference>
<dbReference type="Gene3D" id="3.40.1170.10">
    <property type="entry name" value="DNA repair protein MutS, domain I"/>
    <property type="match status" value="1"/>
</dbReference>
<dbReference type="Gene3D" id="3.30.420.110">
    <property type="entry name" value="MutS, connector domain"/>
    <property type="match status" value="1"/>
</dbReference>
<dbReference type="Gene3D" id="3.40.50.300">
    <property type="entry name" value="P-loop containing nucleotide triphosphate hydrolases"/>
    <property type="match status" value="1"/>
</dbReference>
<dbReference type="HAMAP" id="MF_00096">
    <property type="entry name" value="MutS"/>
    <property type="match status" value="1"/>
</dbReference>
<dbReference type="InterPro" id="IPR005748">
    <property type="entry name" value="DNA_mismatch_repair_MutS"/>
</dbReference>
<dbReference type="InterPro" id="IPR007695">
    <property type="entry name" value="DNA_mismatch_repair_MutS-lik_N"/>
</dbReference>
<dbReference type="InterPro" id="IPR017261">
    <property type="entry name" value="DNA_mismatch_repair_MutS/MSH"/>
</dbReference>
<dbReference type="InterPro" id="IPR000432">
    <property type="entry name" value="DNA_mismatch_repair_MutS_C"/>
</dbReference>
<dbReference type="InterPro" id="IPR007861">
    <property type="entry name" value="DNA_mismatch_repair_MutS_clamp"/>
</dbReference>
<dbReference type="InterPro" id="IPR007696">
    <property type="entry name" value="DNA_mismatch_repair_MutS_core"/>
</dbReference>
<dbReference type="InterPro" id="IPR016151">
    <property type="entry name" value="DNA_mismatch_repair_MutS_N"/>
</dbReference>
<dbReference type="InterPro" id="IPR036187">
    <property type="entry name" value="DNA_mismatch_repair_MutS_sf"/>
</dbReference>
<dbReference type="InterPro" id="IPR007860">
    <property type="entry name" value="DNA_mmatch_repair_MutS_con_dom"/>
</dbReference>
<dbReference type="InterPro" id="IPR045076">
    <property type="entry name" value="MutS"/>
</dbReference>
<dbReference type="InterPro" id="IPR036678">
    <property type="entry name" value="MutS_con_dom_sf"/>
</dbReference>
<dbReference type="InterPro" id="IPR027417">
    <property type="entry name" value="P-loop_NTPase"/>
</dbReference>
<dbReference type="NCBIfam" id="TIGR01070">
    <property type="entry name" value="mutS1"/>
    <property type="match status" value="1"/>
</dbReference>
<dbReference type="NCBIfam" id="NF003810">
    <property type="entry name" value="PRK05399.1"/>
    <property type="match status" value="1"/>
</dbReference>
<dbReference type="PANTHER" id="PTHR11361:SF34">
    <property type="entry name" value="DNA MISMATCH REPAIR PROTEIN MSH1, MITOCHONDRIAL"/>
    <property type="match status" value="1"/>
</dbReference>
<dbReference type="PANTHER" id="PTHR11361">
    <property type="entry name" value="DNA MISMATCH REPAIR PROTEIN MUTS FAMILY MEMBER"/>
    <property type="match status" value="1"/>
</dbReference>
<dbReference type="Pfam" id="PF01624">
    <property type="entry name" value="MutS_I"/>
    <property type="match status" value="1"/>
</dbReference>
<dbReference type="Pfam" id="PF05188">
    <property type="entry name" value="MutS_II"/>
    <property type="match status" value="1"/>
</dbReference>
<dbReference type="Pfam" id="PF05192">
    <property type="entry name" value="MutS_III"/>
    <property type="match status" value="1"/>
</dbReference>
<dbReference type="Pfam" id="PF05190">
    <property type="entry name" value="MutS_IV"/>
    <property type="match status" value="1"/>
</dbReference>
<dbReference type="Pfam" id="PF00488">
    <property type="entry name" value="MutS_V"/>
    <property type="match status" value="1"/>
</dbReference>
<dbReference type="PIRSF" id="PIRSF037677">
    <property type="entry name" value="DNA_mis_repair_Msh6"/>
    <property type="match status" value="1"/>
</dbReference>
<dbReference type="SMART" id="SM00534">
    <property type="entry name" value="MUTSac"/>
    <property type="match status" value="1"/>
</dbReference>
<dbReference type="SMART" id="SM00533">
    <property type="entry name" value="MUTSd"/>
    <property type="match status" value="1"/>
</dbReference>
<dbReference type="SUPFAM" id="SSF55271">
    <property type="entry name" value="DNA repair protein MutS, domain I"/>
    <property type="match status" value="1"/>
</dbReference>
<dbReference type="SUPFAM" id="SSF53150">
    <property type="entry name" value="DNA repair protein MutS, domain II"/>
    <property type="match status" value="1"/>
</dbReference>
<dbReference type="SUPFAM" id="SSF48334">
    <property type="entry name" value="DNA repair protein MutS, domain III"/>
    <property type="match status" value="1"/>
</dbReference>
<dbReference type="SUPFAM" id="SSF52540">
    <property type="entry name" value="P-loop containing nucleoside triphosphate hydrolases"/>
    <property type="match status" value="1"/>
</dbReference>
<dbReference type="PROSITE" id="PS00486">
    <property type="entry name" value="DNA_MISMATCH_REPAIR_2"/>
    <property type="match status" value="1"/>
</dbReference>
<feature type="chain" id="PRO_1000093656" description="DNA mismatch repair protein MutS">
    <location>
        <begin position="1"/>
        <end position="851"/>
    </location>
</feature>
<feature type="binding site" evidence="1">
    <location>
        <begin position="614"/>
        <end position="621"/>
    </location>
    <ligand>
        <name>ATP</name>
        <dbReference type="ChEBI" id="CHEBI:30616"/>
    </ligand>
</feature>
<keyword id="KW-0067">ATP-binding</keyword>
<keyword id="KW-0227">DNA damage</keyword>
<keyword id="KW-0234">DNA repair</keyword>
<keyword id="KW-0238">DNA-binding</keyword>
<keyword id="KW-0547">Nucleotide-binding</keyword>
<gene>
    <name evidence="1" type="primary">mutS</name>
    <name type="ordered locus">YpAngola_A0956</name>
</gene>